<evidence type="ECO:0000255" key="1">
    <source>
        <dbReference type="HAMAP-Rule" id="MF_00693"/>
    </source>
</evidence>
<name>Y1346_ACIC1</name>
<comment type="subcellular location">
    <subcellularLocation>
        <location evidence="1">Cytoplasm</location>
    </subcellularLocation>
</comment>
<comment type="similarity">
    <text evidence="1">Belongs to the TACO1 family.</text>
</comment>
<gene>
    <name type="ordered locus">Acel_1346</name>
</gene>
<keyword id="KW-0963">Cytoplasm</keyword>
<keyword id="KW-0238">DNA-binding</keyword>
<keyword id="KW-1185">Reference proteome</keyword>
<keyword id="KW-0804">Transcription</keyword>
<keyword id="KW-0805">Transcription regulation</keyword>
<protein>
    <recommendedName>
        <fullName evidence="1">Probable transcriptional regulatory protein Acel_1346</fullName>
    </recommendedName>
</protein>
<proteinExistence type="inferred from homology"/>
<feature type="chain" id="PRO_1000045265" description="Probable transcriptional regulatory protein Acel_1346">
    <location>
        <begin position="1"/>
        <end position="248"/>
    </location>
</feature>
<organism>
    <name type="scientific">Acidothermus cellulolyticus (strain ATCC 43068 / DSM 8971 / 11B)</name>
    <dbReference type="NCBI Taxonomy" id="351607"/>
    <lineage>
        <taxon>Bacteria</taxon>
        <taxon>Bacillati</taxon>
        <taxon>Actinomycetota</taxon>
        <taxon>Actinomycetes</taxon>
        <taxon>Acidothermales</taxon>
        <taxon>Acidothermaceae</taxon>
        <taxon>Acidothermus</taxon>
    </lineage>
</organism>
<reference key="1">
    <citation type="journal article" date="2009" name="Genome Res.">
        <title>Complete genome of the cellulolytic thermophile Acidothermus cellulolyticus 11B provides insights into its ecophysiological and evolutionary adaptations.</title>
        <authorList>
            <person name="Barabote R.D."/>
            <person name="Xie G."/>
            <person name="Leu D.H."/>
            <person name="Normand P."/>
            <person name="Necsulea A."/>
            <person name="Daubin V."/>
            <person name="Medigue C."/>
            <person name="Adney W.S."/>
            <person name="Xu X.C."/>
            <person name="Lapidus A."/>
            <person name="Parales R.E."/>
            <person name="Detter C."/>
            <person name="Pujic P."/>
            <person name="Bruce D."/>
            <person name="Lavire C."/>
            <person name="Challacombe J.F."/>
            <person name="Brettin T.S."/>
            <person name="Berry A.M."/>
        </authorList>
    </citation>
    <scope>NUCLEOTIDE SEQUENCE [LARGE SCALE GENOMIC DNA]</scope>
    <source>
        <strain>ATCC 43068 / DSM 8971 / 11B</strain>
    </source>
</reference>
<dbReference type="EMBL" id="CP000481">
    <property type="protein sequence ID" value="ABK53118.1"/>
    <property type="molecule type" value="Genomic_DNA"/>
</dbReference>
<dbReference type="RefSeq" id="WP_011720181.1">
    <property type="nucleotide sequence ID" value="NC_008578.1"/>
</dbReference>
<dbReference type="SMR" id="A0LUK8"/>
<dbReference type="FunCoup" id="A0LUK8">
    <property type="interactions" value="251"/>
</dbReference>
<dbReference type="STRING" id="351607.Acel_1346"/>
<dbReference type="KEGG" id="ace:Acel_1346"/>
<dbReference type="eggNOG" id="COG0217">
    <property type="taxonomic scope" value="Bacteria"/>
</dbReference>
<dbReference type="HOGENOM" id="CLU_062974_2_2_11"/>
<dbReference type="InParanoid" id="A0LUK8"/>
<dbReference type="OrthoDB" id="9781053at2"/>
<dbReference type="Proteomes" id="UP000008221">
    <property type="component" value="Chromosome"/>
</dbReference>
<dbReference type="GO" id="GO:0005829">
    <property type="term" value="C:cytosol"/>
    <property type="evidence" value="ECO:0007669"/>
    <property type="project" value="TreeGrafter"/>
</dbReference>
<dbReference type="GO" id="GO:0003677">
    <property type="term" value="F:DNA binding"/>
    <property type="evidence" value="ECO:0007669"/>
    <property type="project" value="UniProtKB-UniRule"/>
</dbReference>
<dbReference type="GO" id="GO:0006355">
    <property type="term" value="P:regulation of DNA-templated transcription"/>
    <property type="evidence" value="ECO:0007669"/>
    <property type="project" value="UniProtKB-UniRule"/>
</dbReference>
<dbReference type="FunFam" id="1.10.10.200:FF:000002">
    <property type="entry name" value="Probable transcriptional regulatory protein CLM62_37755"/>
    <property type="match status" value="1"/>
</dbReference>
<dbReference type="Gene3D" id="1.10.10.200">
    <property type="match status" value="1"/>
</dbReference>
<dbReference type="Gene3D" id="3.30.70.980">
    <property type="match status" value="2"/>
</dbReference>
<dbReference type="HAMAP" id="MF_00693">
    <property type="entry name" value="Transcrip_reg_TACO1"/>
    <property type="match status" value="1"/>
</dbReference>
<dbReference type="InterPro" id="IPR017856">
    <property type="entry name" value="Integrase-like_N"/>
</dbReference>
<dbReference type="InterPro" id="IPR048300">
    <property type="entry name" value="TACO1_YebC-like_2nd/3rd_dom"/>
</dbReference>
<dbReference type="InterPro" id="IPR049083">
    <property type="entry name" value="TACO1_YebC_N"/>
</dbReference>
<dbReference type="InterPro" id="IPR002876">
    <property type="entry name" value="Transcrip_reg_TACO1-like"/>
</dbReference>
<dbReference type="InterPro" id="IPR026564">
    <property type="entry name" value="Transcrip_reg_TACO1-like_dom3"/>
</dbReference>
<dbReference type="InterPro" id="IPR029072">
    <property type="entry name" value="YebC-like"/>
</dbReference>
<dbReference type="NCBIfam" id="NF001030">
    <property type="entry name" value="PRK00110.1"/>
    <property type="match status" value="1"/>
</dbReference>
<dbReference type="NCBIfam" id="NF009044">
    <property type="entry name" value="PRK12378.1"/>
    <property type="match status" value="1"/>
</dbReference>
<dbReference type="NCBIfam" id="TIGR01033">
    <property type="entry name" value="YebC/PmpR family DNA-binding transcriptional regulator"/>
    <property type="match status" value="1"/>
</dbReference>
<dbReference type="PANTHER" id="PTHR12532:SF6">
    <property type="entry name" value="TRANSCRIPTIONAL REGULATORY PROTEIN YEBC-RELATED"/>
    <property type="match status" value="1"/>
</dbReference>
<dbReference type="PANTHER" id="PTHR12532">
    <property type="entry name" value="TRANSLATIONAL ACTIVATOR OF CYTOCHROME C OXIDASE 1"/>
    <property type="match status" value="1"/>
</dbReference>
<dbReference type="Pfam" id="PF20772">
    <property type="entry name" value="TACO1_YebC_N"/>
    <property type="match status" value="1"/>
</dbReference>
<dbReference type="Pfam" id="PF01709">
    <property type="entry name" value="Transcrip_reg"/>
    <property type="match status" value="1"/>
</dbReference>
<dbReference type="SUPFAM" id="SSF75625">
    <property type="entry name" value="YebC-like"/>
    <property type="match status" value="1"/>
</dbReference>
<accession>A0LUK8</accession>
<sequence length="248" mass="26552">MSGHSKWATTKHKKAVIDARRGKLFAKLIKNIEVAARVGGPDPNGNPTLADAIAKARDQSVPNDNIERAIRRGAGLEAGGTDWEPIIYEGYGPGGVALLIECLTDNRNRAASEVRTTMTRNGGSMADPGSVAYLFNRKGIVIVPKEGRSEDDVLAAVLDAGAEEVNDLGESFEVVSEPGDLTRVRDALSAAGIRYESADVAWQPTVNVPLDDDTARKVLRLIEALEDCDDVQAVWANFDISDAVLAEV</sequence>